<gene>
    <name type="ORF">IIV6-206L</name>
</gene>
<proteinExistence type="predicted"/>
<organismHost>
    <name type="scientific">Acheta domesticus</name>
    <name type="common">House cricket</name>
    <dbReference type="NCBI Taxonomy" id="6997"/>
</organismHost>
<organismHost>
    <name type="scientific">Chilo suppressalis</name>
    <name type="common">Asiatic rice borer moth</name>
    <dbReference type="NCBI Taxonomy" id="168631"/>
</organismHost>
<organismHost>
    <name type="scientific">Gryllus bimaculatus</name>
    <name type="common">Two-spotted cricket</name>
    <dbReference type="NCBI Taxonomy" id="6999"/>
</organismHost>
<organismHost>
    <name type="scientific">Gryllus campestris</name>
    <dbReference type="NCBI Taxonomy" id="58607"/>
</organismHost>
<organismHost>
    <name type="scientific">Spodoptera frugiperda</name>
    <name type="common">Fall armyworm</name>
    <dbReference type="NCBI Taxonomy" id="7108"/>
</organismHost>
<feature type="chain" id="PRO_0000378025" description="Uncharacterized protein 206L">
    <location>
        <begin position="1"/>
        <end position="152"/>
    </location>
</feature>
<sequence length="152" mass="17231">MSEEKLSTNTCEIVCQSKDDTKKSILSIKLMEEIVNSLVKAHLKFASKALGDDEKIVVFVPPEIWNTVKKLPVIPQEGNSEEKGKWRVRKDEENTYFLSESLQSSSLDSEAFQLFKSVANDDDIQIPDLEKKLVEENGFVILNQHLDVSALF</sequence>
<keyword id="KW-1185">Reference proteome</keyword>
<dbReference type="EMBL" id="AF303741">
    <property type="protein sequence ID" value="AAK82068.1"/>
    <property type="molecule type" value="Genomic_DNA"/>
</dbReference>
<dbReference type="RefSeq" id="NP_149669.1">
    <property type="nucleotide sequence ID" value="NC_003038.1"/>
</dbReference>
<dbReference type="KEGG" id="vg:1733299"/>
<dbReference type="OrthoDB" id="36733at10239"/>
<dbReference type="Proteomes" id="UP000001359">
    <property type="component" value="Genome"/>
</dbReference>
<name>206L_IIV6</name>
<organism>
    <name type="scientific">Invertebrate iridescent virus 6</name>
    <name type="common">IIV-6</name>
    <name type="synonym">Chilo iridescent virus</name>
    <dbReference type="NCBI Taxonomy" id="176652"/>
    <lineage>
        <taxon>Viruses</taxon>
        <taxon>Varidnaviria</taxon>
        <taxon>Bamfordvirae</taxon>
        <taxon>Nucleocytoviricota</taxon>
        <taxon>Megaviricetes</taxon>
        <taxon>Pimascovirales</taxon>
        <taxon>Iridoviridae</taxon>
        <taxon>Betairidovirinae</taxon>
        <taxon>Iridovirus</taxon>
    </lineage>
</organism>
<accession>Q91FW4</accession>
<protein>
    <recommendedName>
        <fullName>Uncharacterized protein 206L</fullName>
    </recommendedName>
</protein>
<reference key="1">
    <citation type="journal article" date="2001" name="Virology">
        <title>Analysis of the first complete DNA sequence of an invertebrate iridovirus: coding strategy of the genome of Chilo iridescent virus.</title>
        <authorList>
            <person name="Jakob N.J."/>
            <person name="Mueller K."/>
            <person name="Bahr U."/>
            <person name="Darai G."/>
        </authorList>
    </citation>
    <scope>NUCLEOTIDE SEQUENCE [LARGE SCALE GENOMIC DNA]</scope>
</reference>
<reference key="2">
    <citation type="journal article" date="2007" name="Virol. J.">
        <title>Comparative genomic analysis of the family Iridoviridae: re-annotating and defining the core set of iridovirus genes.</title>
        <authorList>
            <person name="Eaton H.E."/>
            <person name="Metcalf J."/>
            <person name="Penny E."/>
            <person name="Tcherepanov V."/>
            <person name="Upton C."/>
            <person name="Brunetti C.R."/>
        </authorList>
    </citation>
    <scope>GENOME REANNOTATION</scope>
</reference>